<protein>
    <recommendedName>
        <fullName evidence="1">Biosynthetic arginine decarboxylase</fullName>
        <shortName evidence="1">ADC</shortName>
        <ecNumber evidence="1">4.1.1.19</ecNumber>
    </recommendedName>
</protein>
<organism>
    <name type="scientific">Shewanella amazonensis (strain ATCC BAA-1098 / SB2B)</name>
    <dbReference type="NCBI Taxonomy" id="326297"/>
    <lineage>
        <taxon>Bacteria</taxon>
        <taxon>Pseudomonadati</taxon>
        <taxon>Pseudomonadota</taxon>
        <taxon>Gammaproteobacteria</taxon>
        <taxon>Alteromonadales</taxon>
        <taxon>Shewanellaceae</taxon>
        <taxon>Shewanella</taxon>
    </lineage>
</organism>
<evidence type="ECO:0000255" key="1">
    <source>
        <dbReference type="HAMAP-Rule" id="MF_01417"/>
    </source>
</evidence>
<keyword id="KW-0210">Decarboxylase</keyword>
<keyword id="KW-0456">Lyase</keyword>
<keyword id="KW-0460">Magnesium</keyword>
<keyword id="KW-0479">Metal-binding</keyword>
<keyword id="KW-0620">Polyamine biosynthesis</keyword>
<keyword id="KW-0663">Pyridoxal phosphate</keyword>
<keyword id="KW-1185">Reference proteome</keyword>
<keyword id="KW-0745">Spermidine biosynthesis</keyword>
<sequence length="636" mass="71125">MNEWSIDDARAGYNVAHWSQGFYGISDEGEVTVSPDPKNPTFKIGLNALAKDMVKAGVSLPVLVRFPQILHHRVDHLCQMFNQAIQKYEYQSDYLLVYPIKVNQQQTVVEEILASQVSKTVPQLGLEAGSKPELMAVLAMAQKASSVIVCNGYKDKEYIRLALIGEKLGHSVYIVLEKMSELQMVLEESKKLGVTPRLGLRARLAFQGKGKWQASGGEKSKFGLSAAQILKVVERLKDEDMLESLQLLHFHLGSQIANIRDIRHGVGEAARFYCELRKLGAKVNCFDVGGGLAVDYDGTRSQSNNSMNYALAEYANNIVSVLTDVCNQNEQPMPRIISESGRYLTAHHAVLITDVIGTEAYSPEDIPAPEEEAPQLLHNMWRSWNEISSRLDQRALIEIFHDTQSDLAEAQSLFALGQLSLEDRAWAEQCNLAVCHELQGLMNARNRYQRPIIDELNEKLADRFFVNFSLFQSLPDAWGIDQVFPVLPLSGLDKVPERRAVMLDITCDSDGIVDQYVDGQGIETTLPVPNWSAEDPYLIGFFLVGAYQEILGDLHNLFGDTNSAVVRIDEEGQTNIESVLAGDTVADVLRYVNLDAVSFMRTYEELVNSHIAEDERAMILEELQVGLKGYTYLEDF</sequence>
<accession>A1S712</accession>
<name>SPEA_SHEAM</name>
<proteinExistence type="inferred from homology"/>
<feature type="chain" id="PRO_1000024264" description="Biosynthetic arginine decarboxylase">
    <location>
        <begin position="1"/>
        <end position="636"/>
    </location>
</feature>
<feature type="binding site" evidence="1">
    <location>
        <begin position="286"/>
        <end position="296"/>
    </location>
    <ligand>
        <name>substrate</name>
    </ligand>
</feature>
<feature type="modified residue" description="N6-(pyridoxal phosphate)lysine" evidence="1">
    <location>
        <position position="101"/>
    </location>
</feature>
<comment type="function">
    <text evidence="1">Catalyzes the biosynthesis of agmatine from arginine.</text>
</comment>
<comment type="catalytic activity">
    <reaction evidence="1">
        <text>L-arginine + H(+) = agmatine + CO2</text>
        <dbReference type="Rhea" id="RHEA:17641"/>
        <dbReference type="ChEBI" id="CHEBI:15378"/>
        <dbReference type="ChEBI" id="CHEBI:16526"/>
        <dbReference type="ChEBI" id="CHEBI:32682"/>
        <dbReference type="ChEBI" id="CHEBI:58145"/>
        <dbReference type="EC" id="4.1.1.19"/>
    </reaction>
</comment>
<comment type="cofactor">
    <cofactor evidence="1">
        <name>Mg(2+)</name>
        <dbReference type="ChEBI" id="CHEBI:18420"/>
    </cofactor>
</comment>
<comment type="cofactor">
    <cofactor evidence="1">
        <name>pyridoxal 5'-phosphate</name>
        <dbReference type="ChEBI" id="CHEBI:597326"/>
    </cofactor>
</comment>
<comment type="pathway">
    <text evidence="1">Amine and polyamine biosynthesis; agmatine biosynthesis; agmatine from L-arginine: step 1/1.</text>
</comment>
<comment type="similarity">
    <text evidence="1">Belongs to the Orn/Lys/Arg decarboxylase class-II family. SpeA subfamily.</text>
</comment>
<gene>
    <name evidence="1" type="primary">speA</name>
    <name type="ordered locus">Sama_1963</name>
</gene>
<dbReference type="EC" id="4.1.1.19" evidence="1"/>
<dbReference type="EMBL" id="CP000507">
    <property type="protein sequence ID" value="ABM00169.1"/>
    <property type="molecule type" value="Genomic_DNA"/>
</dbReference>
<dbReference type="RefSeq" id="WP_011760076.1">
    <property type="nucleotide sequence ID" value="NC_008700.1"/>
</dbReference>
<dbReference type="SMR" id="A1S712"/>
<dbReference type="STRING" id="326297.Sama_1963"/>
<dbReference type="KEGG" id="saz:Sama_1963"/>
<dbReference type="eggNOG" id="COG1166">
    <property type="taxonomic scope" value="Bacteria"/>
</dbReference>
<dbReference type="HOGENOM" id="CLU_027243_1_0_6"/>
<dbReference type="OrthoDB" id="9802658at2"/>
<dbReference type="UniPathway" id="UPA00186">
    <property type="reaction ID" value="UER00284"/>
</dbReference>
<dbReference type="Proteomes" id="UP000009175">
    <property type="component" value="Chromosome"/>
</dbReference>
<dbReference type="GO" id="GO:0008792">
    <property type="term" value="F:arginine decarboxylase activity"/>
    <property type="evidence" value="ECO:0007669"/>
    <property type="project" value="UniProtKB-UniRule"/>
</dbReference>
<dbReference type="GO" id="GO:0046872">
    <property type="term" value="F:metal ion binding"/>
    <property type="evidence" value="ECO:0007669"/>
    <property type="project" value="UniProtKB-KW"/>
</dbReference>
<dbReference type="GO" id="GO:0006527">
    <property type="term" value="P:arginine catabolic process"/>
    <property type="evidence" value="ECO:0007669"/>
    <property type="project" value="InterPro"/>
</dbReference>
<dbReference type="GO" id="GO:0033388">
    <property type="term" value="P:putrescine biosynthetic process from arginine"/>
    <property type="evidence" value="ECO:0007669"/>
    <property type="project" value="TreeGrafter"/>
</dbReference>
<dbReference type="GO" id="GO:0008295">
    <property type="term" value="P:spermidine biosynthetic process"/>
    <property type="evidence" value="ECO:0007669"/>
    <property type="project" value="UniProtKB-UniRule"/>
</dbReference>
<dbReference type="CDD" id="cd06830">
    <property type="entry name" value="PLPDE_III_ADC"/>
    <property type="match status" value="1"/>
</dbReference>
<dbReference type="FunFam" id="1.10.287.3440:FF:000001">
    <property type="entry name" value="Biosynthetic arginine decarboxylase"/>
    <property type="match status" value="1"/>
</dbReference>
<dbReference type="FunFam" id="2.40.37.10:FF:000001">
    <property type="entry name" value="Biosynthetic arginine decarboxylase"/>
    <property type="match status" value="1"/>
</dbReference>
<dbReference type="FunFam" id="3.20.20.10:FF:000001">
    <property type="entry name" value="Biosynthetic arginine decarboxylase"/>
    <property type="match status" value="1"/>
</dbReference>
<dbReference type="Gene3D" id="1.10.287.3440">
    <property type="match status" value="1"/>
</dbReference>
<dbReference type="Gene3D" id="1.20.58.930">
    <property type="match status" value="1"/>
</dbReference>
<dbReference type="Gene3D" id="3.20.20.10">
    <property type="entry name" value="Alanine racemase"/>
    <property type="match status" value="1"/>
</dbReference>
<dbReference type="Gene3D" id="2.40.37.10">
    <property type="entry name" value="Lyase, Ornithine Decarboxylase, Chain A, domain 1"/>
    <property type="match status" value="1"/>
</dbReference>
<dbReference type="HAMAP" id="MF_01417">
    <property type="entry name" value="SpeA"/>
    <property type="match status" value="1"/>
</dbReference>
<dbReference type="InterPro" id="IPR009006">
    <property type="entry name" value="Ala_racemase/Decarboxylase_C"/>
</dbReference>
<dbReference type="InterPro" id="IPR040634">
    <property type="entry name" value="Arg_decarb_HB"/>
</dbReference>
<dbReference type="InterPro" id="IPR041128">
    <property type="entry name" value="Arg_decarbox_C"/>
</dbReference>
<dbReference type="InterPro" id="IPR002985">
    <property type="entry name" value="Arg_decrbxlase"/>
</dbReference>
<dbReference type="InterPro" id="IPR022644">
    <property type="entry name" value="De-COase2_N"/>
</dbReference>
<dbReference type="InterPro" id="IPR000183">
    <property type="entry name" value="Orn/DAP/Arg_de-COase"/>
</dbReference>
<dbReference type="InterPro" id="IPR029066">
    <property type="entry name" value="PLP-binding_barrel"/>
</dbReference>
<dbReference type="NCBIfam" id="NF003763">
    <property type="entry name" value="PRK05354.1"/>
    <property type="match status" value="1"/>
</dbReference>
<dbReference type="NCBIfam" id="TIGR01273">
    <property type="entry name" value="speA"/>
    <property type="match status" value="1"/>
</dbReference>
<dbReference type="PANTHER" id="PTHR43295">
    <property type="entry name" value="ARGININE DECARBOXYLASE"/>
    <property type="match status" value="1"/>
</dbReference>
<dbReference type="PANTHER" id="PTHR43295:SF9">
    <property type="entry name" value="BIOSYNTHETIC ARGININE DECARBOXYLASE"/>
    <property type="match status" value="1"/>
</dbReference>
<dbReference type="Pfam" id="PF17810">
    <property type="entry name" value="Arg_decarb_HB"/>
    <property type="match status" value="1"/>
</dbReference>
<dbReference type="Pfam" id="PF17944">
    <property type="entry name" value="Arg_decarbox_C"/>
    <property type="match status" value="1"/>
</dbReference>
<dbReference type="Pfam" id="PF02784">
    <property type="entry name" value="Orn_Arg_deC_N"/>
    <property type="match status" value="1"/>
</dbReference>
<dbReference type="PIRSF" id="PIRSF001336">
    <property type="entry name" value="Arg_decrbxlase"/>
    <property type="match status" value="1"/>
</dbReference>
<dbReference type="PRINTS" id="PR01180">
    <property type="entry name" value="ARGDCRBXLASE"/>
</dbReference>
<dbReference type="PRINTS" id="PR01179">
    <property type="entry name" value="ODADCRBXLASE"/>
</dbReference>
<dbReference type="SUPFAM" id="SSF51419">
    <property type="entry name" value="PLP-binding barrel"/>
    <property type="match status" value="1"/>
</dbReference>
<reference key="1">
    <citation type="submission" date="2006-12" db="EMBL/GenBank/DDBJ databases">
        <title>Complete sequence of Shewanella amazonensis SB2B.</title>
        <authorList>
            <consortium name="US DOE Joint Genome Institute"/>
            <person name="Copeland A."/>
            <person name="Lucas S."/>
            <person name="Lapidus A."/>
            <person name="Barry K."/>
            <person name="Detter J.C."/>
            <person name="Glavina del Rio T."/>
            <person name="Hammon N."/>
            <person name="Israni S."/>
            <person name="Dalin E."/>
            <person name="Tice H."/>
            <person name="Pitluck S."/>
            <person name="Munk A.C."/>
            <person name="Brettin T."/>
            <person name="Bruce D."/>
            <person name="Han C."/>
            <person name="Tapia R."/>
            <person name="Gilna P."/>
            <person name="Schmutz J."/>
            <person name="Larimer F."/>
            <person name="Land M."/>
            <person name="Hauser L."/>
            <person name="Kyrpides N."/>
            <person name="Mikhailova N."/>
            <person name="Fredrickson J."/>
            <person name="Richardson P."/>
        </authorList>
    </citation>
    <scope>NUCLEOTIDE SEQUENCE [LARGE SCALE GENOMIC DNA]</scope>
    <source>
        <strain>ATCC BAA-1098 / SB2B</strain>
    </source>
</reference>